<comment type="function">
    <text evidence="2">Component of the ubiquinol-cytochrome c reductase complex (complex III or cytochrome b-c1 complex) that is part of the mitochondrial respiratory chain. The b-c1 complex mediates electron transfer from ubiquinol to cytochrome c. Contributes to the generation of a proton gradient across the mitochondrial membrane that is then used for ATP synthesis.</text>
</comment>
<comment type="cofactor">
    <cofactor evidence="2">
        <name>heme b</name>
        <dbReference type="ChEBI" id="CHEBI:60344"/>
    </cofactor>
    <text evidence="2">Binds 2 heme b groups non-covalently.</text>
</comment>
<comment type="subunit">
    <text evidence="2">The cytochrome bc1 complex contains 11 subunits: 3 respiratory subunits (MT-CYB, CYC1 and UQCRFS1), 2 core proteins (UQCRC1 and UQCRC2) and 6 low-molecular weight proteins (UQCRH/QCR6, UQCRB/QCR7, UQCRQ/QCR8, UQCR10/QCR9, UQCR11/QCR10 and a cleavage product of UQCRFS1). This cytochrome bc1 complex then forms a dimer.</text>
</comment>
<comment type="subcellular location">
    <subcellularLocation>
        <location evidence="2">Mitochondrion inner membrane</location>
        <topology evidence="2">Multi-pass membrane protein</topology>
    </subcellularLocation>
</comment>
<comment type="miscellaneous">
    <text evidence="1">Heme 1 (or BL or b562) is low-potential and absorbs at about 562 nm, and heme 2 (or BH or b566) is high-potential and absorbs at about 566 nm.</text>
</comment>
<comment type="similarity">
    <text evidence="3 4">Belongs to the cytochrome b family.</text>
</comment>
<comment type="caution">
    <text evidence="2">The full-length protein contains only eight transmembrane helices, not nine as predicted by bioinformatics tools.</text>
</comment>
<feature type="chain" id="PRO_0000060826" description="Cytochrome b">
    <location>
        <begin position="1"/>
        <end position="379"/>
    </location>
</feature>
<feature type="transmembrane region" description="Helical" evidence="2">
    <location>
        <begin position="33"/>
        <end position="53"/>
    </location>
</feature>
<feature type="transmembrane region" description="Helical" evidence="2">
    <location>
        <begin position="77"/>
        <end position="98"/>
    </location>
</feature>
<feature type="transmembrane region" description="Helical" evidence="2">
    <location>
        <begin position="113"/>
        <end position="133"/>
    </location>
</feature>
<feature type="transmembrane region" description="Helical" evidence="2">
    <location>
        <begin position="178"/>
        <end position="198"/>
    </location>
</feature>
<feature type="transmembrane region" description="Helical" evidence="2">
    <location>
        <begin position="226"/>
        <end position="246"/>
    </location>
</feature>
<feature type="transmembrane region" description="Helical" evidence="2">
    <location>
        <begin position="288"/>
        <end position="308"/>
    </location>
</feature>
<feature type="transmembrane region" description="Helical" evidence="2">
    <location>
        <begin position="320"/>
        <end position="340"/>
    </location>
</feature>
<feature type="transmembrane region" description="Helical" evidence="2">
    <location>
        <begin position="347"/>
        <end position="367"/>
    </location>
</feature>
<feature type="binding site" description="axial binding residue" evidence="2">
    <location>
        <position position="83"/>
    </location>
    <ligand>
        <name>heme b</name>
        <dbReference type="ChEBI" id="CHEBI:60344"/>
        <label>b562</label>
    </ligand>
    <ligandPart>
        <name>Fe</name>
        <dbReference type="ChEBI" id="CHEBI:18248"/>
    </ligandPart>
</feature>
<feature type="binding site" description="axial binding residue" evidence="2">
    <location>
        <position position="97"/>
    </location>
    <ligand>
        <name>heme b</name>
        <dbReference type="ChEBI" id="CHEBI:60344"/>
        <label>b566</label>
    </ligand>
    <ligandPart>
        <name>Fe</name>
        <dbReference type="ChEBI" id="CHEBI:18248"/>
    </ligandPart>
</feature>
<feature type="binding site" description="axial binding residue" evidence="2">
    <location>
        <position position="182"/>
    </location>
    <ligand>
        <name>heme b</name>
        <dbReference type="ChEBI" id="CHEBI:60344"/>
        <label>b562</label>
    </ligand>
    <ligandPart>
        <name>Fe</name>
        <dbReference type="ChEBI" id="CHEBI:18248"/>
    </ligandPart>
</feature>
<feature type="binding site" description="axial binding residue" evidence="2">
    <location>
        <position position="196"/>
    </location>
    <ligand>
        <name>heme b</name>
        <dbReference type="ChEBI" id="CHEBI:60344"/>
        <label>b566</label>
    </ligand>
    <ligandPart>
        <name>Fe</name>
        <dbReference type="ChEBI" id="CHEBI:18248"/>
    </ligandPart>
</feature>
<feature type="binding site" evidence="2">
    <location>
        <position position="201"/>
    </location>
    <ligand>
        <name>a ubiquinone</name>
        <dbReference type="ChEBI" id="CHEBI:16389"/>
    </ligand>
</feature>
<feature type="sequence variant" description="In strain: Isolate DAO1Cds98/8/21-1Aomori.">
    <original>A</original>
    <variation>T</variation>
    <location>
        <position position="23"/>
    </location>
</feature>
<feature type="sequence variant" description="In strain: Isolate SO2Kmisc100 and Isolate SO2Kmisc101.">
    <original>T</original>
    <variation>I</variation>
    <location>
        <position position="158"/>
    </location>
</feature>
<feature type="sequence variant" description="In strain: Isolate SO2Kmisc100.">
    <original>P</original>
    <variation>L</variation>
    <location>
        <position position="258"/>
    </location>
</feature>
<feature type="sequence variant" description="In strain: Isolate SO2Kmisc101.">
    <original>A</original>
    <variation>G</variation>
    <location>
        <position position="302"/>
    </location>
</feature>
<feature type="sequence variant" description="In strain: Isolate HS1296, Isolate HS1297 and Isolate HSO960926-1.">
    <original>H</original>
    <variation>Y</variation>
    <location>
        <position position="345"/>
    </location>
</feature>
<feature type="sequence variant" description="In strain: Isolate HA6134, Isolate HS1237, Isolate HS1295, Isolate HS1296, Isolate HS1297, Isolate HSO960926-1, Isolate SO2Kmisc100 and Isolate SO2Kmisc101.">
    <original>M</original>
    <variation>T</variation>
    <location>
        <position position="360"/>
    </location>
</feature>
<feature type="sequence variant" description="In strain: Isolate HA6134, Isolate SO2Kmisc100 and Isolate SO2Kmisc101.">
    <original>I</original>
    <variation>V</variation>
    <location>
        <position position="365"/>
    </location>
</feature>
<proteinExistence type="inferred from homology"/>
<geneLocation type="mitochondrion"/>
<dbReference type="EMBL" id="AB077059">
    <property type="protein sequence ID" value="BAB88559.1"/>
    <property type="molecule type" value="Genomic_DNA"/>
</dbReference>
<dbReference type="EMBL" id="AB077060">
    <property type="protein sequence ID" value="BAB88560.1"/>
    <property type="molecule type" value="Genomic_DNA"/>
</dbReference>
<dbReference type="EMBL" id="AB077061">
    <property type="protein sequence ID" value="BAB88561.1"/>
    <property type="molecule type" value="Genomic_DNA"/>
</dbReference>
<dbReference type="EMBL" id="AB077062">
    <property type="protein sequence ID" value="BAB88562.1"/>
    <property type="molecule type" value="Genomic_DNA"/>
</dbReference>
<dbReference type="EMBL" id="AB077063">
    <property type="protein sequence ID" value="BAB88563.1"/>
    <property type="molecule type" value="Genomic_DNA"/>
</dbReference>
<dbReference type="EMBL" id="AB077064">
    <property type="protein sequence ID" value="BAB88564.1"/>
    <property type="molecule type" value="Genomic_DNA"/>
</dbReference>
<dbReference type="EMBL" id="AB077065">
    <property type="protein sequence ID" value="BAB88565.1"/>
    <property type="molecule type" value="Genomic_DNA"/>
</dbReference>
<dbReference type="EMBL" id="AB077066">
    <property type="protein sequence ID" value="BAB88566.1"/>
    <property type="molecule type" value="Genomic_DNA"/>
</dbReference>
<dbReference type="EMBL" id="AB077067">
    <property type="protein sequence ID" value="BAB88567.1"/>
    <property type="molecule type" value="Genomic_DNA"/>
</dbReference>
<dbReference type="EMBL" id="AB077068">
    <property type="protein sequence ID" value="BAB88568.1"/>
    <property type="molecule type" value="Genomic_DNA"/>
</dbReference>
<dbReference type="EMBL" id="AB077069">
    <property type="protein sequence ID" value="BAB88569.1"/>
    <property type="molecule type" value="Genomic_DNA"/>
</dbReference>
<dbReference type="EMBL" id="AB077070">
    <property type="protein sequence ID" value="BAB88570.1"/>
    <property type="molecule type" value="Genomic_DNA"/>
</dbReference>
<dbReference type="EMBL" id="AB077270">
    <property type="protein sequence ID" value="BAB88598.1"/>
    <property type="molecule type" value="Genomic_DNA"/>
</dbReference>
<dbReference type="EMBL" id="AB077271">
    <property type="protein sequence ID" value="BAB88599.1"/>
    <property type="molecule type" value="Genomic_DNA"/>
</dbReference>
<dbReference type="EMBL" id="AB077272">
    <property type="protein sequence ID" value="BAB88600.1"/>
    <property type="molecule type" value="Genomic_DNA"/>
</dbReference>
<dbReference type="EMBL" id="AB077273">
    <property type="protein sequence ID" value="BAB88601.1"/>
    <property type="molecule type" value="Genomic_DNA"/>
</dbReference>
<dbReference type="EMBL" id="AB077274">
    <property type="protein sequence ID" value="BAB88602.1"/>
    <property type="molecule type" value="Genomic_DNA"/>
</dbReference>
<dbReference type="EMBL" id="AB077275">
    <property type="protein sequence ID" value="BAB88603.1"/>
    <property type="molecule type" value="Genomic_DNA"/>
</dbReference>
<dbReference type="EMBL" id="AB077276">
    <property type="protein sequence ID" value="BAB88604.1"/>
    <property type="molecule type" value="Genomic_DNA"/>
</dbReference>
<dbReference type="EMBL" id="AB077277">
    <property type="protein sequence ID" value="BAB88605.1"/>
    <property type="molecule type" value="Genomic_DNA"/>
</dbReference>
<dbReference type="SMR" id="Q8SE89"/>
<dbReference type="GO" id="GO:0005743">
    <property type="term" value="C:mitochondrial inner membrane"/>
    <property type="evidence" value="ECO:0007669"/>
    <property type="project" value="UniProtKB-SubCell"/>
</dbReference>
<dbReference type="GO" id="GO:0045275">
    <property type="term" value="C:respiratory chain complex III"/>
    <property type="evidence" value="ECO:0007669"/>
    <property type="project" value="InterPro"/>
</dbReference>
<dbReference type="GO" id="GO:0046872">
    <property type="term" value="F:metal ion binding"/>
    <property type="evidence" value="ECO:0007669"/>
    <property type="project" value="UniProtKB-KW"/>
</dbReference>
<dbReference type="GO" id="GO:0008121">
    <property type="term" value="F:ubiquinol-cytochrome-c reductase activity"/>
    <property type="evidence" value="ECO:0007669"/>
    <property type="project" value="InterPro"/>
</dbReference>
<dbReference type="GO" id="GO:0006122">
    <property type="term" value="P:mitochondrial electron transport, ubiquinol to cytochrome c"/>
    <property type="evidence" value="ECO:0007669"/>
    <property type="project" value="TreeGrafter"/>
</dbReference>
<dbReference type="CDD" id="cd00290">
    <property type="entry name" value="cytochrome_b_C"/>
    <property type="match status" value="1"/>
</dbReference>
<dbReference type="CDD" id="cd00284">
    <property type="entry name" value="Cytochrome_b_N"/>
    <property type="match status" value="1"/>
</dbReference>
<dbReference type="FunFam" id="1.20.810.10:FF:000002">
    <property type="entry name" value="Cytochrome b"/>
    <property type="match status" value="1"/>
</dbReference>
<dbReference type="Gene3D" id="1.20.810.10">
    <property type="entry name" value="Cytochrome Bc1 Complex, Chain C"/>
    <property type="match status" value="1"/>
</dbReference>
<dbReference type="InterPro" id="IPR005798">
    <property type="entry name" value="Cyt_b/b6_C"/>
</dbReference>
<dbReference type="InterPro" id="IPR036150">
    <property type="entry name" value="Cyt_b/b6_C_sf"/>
</dbReference>
<dbReference type="InterPro" id="IPR005797">
    <property type="entry name" value="Cyt_b/b6_N"/>
</dbReference>
<dbReference type="InterPro" id="IPR027387">
    <property type="entry name" value="Cytb/b6-like_sf"/>
</dbReference>
<dbReference type="InterPro" id="IPR030689">
    <property type="entry name" value="Cytochrome_b"/>
</dbReference>
<dbReference type="InterPro" id="IPR048260">
    <property type="entry name" value="Cytochrome_b_C_euk/bac"/>
</dbReference>
<dbReference type="InterPro" id="IPR048259">
    <property type="entry name" value="Cytochrome_b_N_euk/bac"/>
</dbReference>
<dbReference type="InterPro" id="IPR016174">
    <property type="entry name" value="Di-haem_cyt_TM"/>
</dbReference>
<dbReference type="PANTHER" id="PTHR19271">
    <property type="entry name" value="CYTOCHROME B"/>
    <property type="match status" value="1"/>
</dbReference>
<dbReference type="PANTHER" id="PTHR19271:SF16">
    <property type="entry name" value="CYTOCHROME B"/>
    <property type="match status" value="1"/>
</dbReference>
<dbReference type="Pfam" id="PF00032">
    <property type="entry name" value="Cytochrom_B_C"/>
    <property type="match status" value="1"/>
</dbReference>
<dbReference type="Pfam" id="PF00033">
    <property type="entry name" value="Cytochrome_B"/>
    <property type="match status" value="1"/>
</dbReference>
<dbReference type="PIRSF" id="PIRSF038885">
    <property type="entry name" value="COB"/>
    <property type="match status" value="1"/>
</dbReference>
<dbReference type="SUPFAM" id="SSF81648">
    <property type="entry name" value="a domain/subunit of cytochrome bc1 complex (Ubiquinol-cytochrome c reductase)"/>
    <property type="match status" value="1"/>
</dbReference>
<dbReference type="SUPFAM" id="SSF81342">
    <property type="entry name" value="Transmembrane di-heme cytochromes"/>
    <property type="match status" value="1"/>
</dbReference>
<dbReference type="PROSITE" id="PS51003">
    <property type="entry name" value="CYTB_CTER"/>
    <property type="match status" value="1"/>
</dbReference>
<dbReference type="PROSITE" id="PS51002">
    <property type="entry name" value="CYTB_NTER"/>
    <property type="match status" value="1"/>
</dbReference>
<gene>
    <name type="primary">MT-CYB</name>
    <name type="synonym">COB</name>
    <name type="synonym">CYTB</name>
    <name type="synonym">MTCYB</name>
</gene>
<reference key="1">
    <citation type="submission" date="2002-01" db="EMBL/GenBank/DDBJ databases">
        <title>Molecular phylogeny of East Asiatic white-toothed shrews genus Crocidura.</title>
        <authorList>
            <person name="Ohdachi S.D."/>
            <person name="Iwasa M.A."/>
            <person name="Han S."/>
        </authorList>
    </citation>
    <scope>NUCLEOTIDE SEQUENCE [GENOMIC DNA]</scope>
    <source>
        <strain>Isolate DAO1Cds98/8/21-1Aomori</strain>
        <strain>Isolate HA5295</strain>
        <strain>Isolate HA5296</strain>
        <strain>Isolate HA5464</strain>
        <strain>Isolate HA5796</strain>
        <strain>Isolate HA6134</strain>
        <strain>Isolate HEG113</strain>
        <strain>Isolate HEG232</strain>
        <strain>Isolate HEG240</strain>
        <strain>Isolate HEG246</strain>
        <strain>Isolate HS1237</strain>
        <strain>Isolate HS1295</strain>
        <strain>Isolate HS1296</strain>
        <strain>Isolate HS1297</strain>
        <strain>Isolate HS1306</strain>
        <strain>Isolate HSO960925-1</strain>
        <strain>Isolate HSO960926-1</strain>
        <strain>Isolate HSO960926-2</strain>
        <strain>Isolate SO2Kmisc100</strain>
        <strain>Isolate SO2Kmisc101</strain>
    </source>
</reference>
<sequence>MNNIRKTHPLMKIVNSSFIDLPAPSNISSWWNFGSLLGICLIAQILTGLFLAMHYTSDTMTAFSSVTHICRDVNYGWLIRYLHANGASMFFICLFLHVGRGLYYGSYMYLETWNIGVLLLFAVMATAFMGYVLPWGQMSFWGATVITNLLSAIPYIGTNLVEWIWGGFSVDKATLTRFFAFHFILPFIVAALAGVHLLFLHETGSNNPSGLNSDTDKIPFHPYYTIKDILGALIMITALSSLVLFSPDLLGDPDNYIPANPLNTPPHIKPEWYFLFAYAILRSIPNKLGGVLALVLSIAILAIIPLLHTAKQRSMMFRPLSQCLFWILVADLFTLTWIGGQPVEHPFVVIGQLASVIYFMLILLIMPTTSMIENRLLKW</sequence>
<accession>Q8SE89</accession>
<accession>Q8SE87</accession>
<accession>Q8SE88</accession>
<accession>Q8SJX6</accession>
<accession>Q8SJX7</accession>
<accession>Q8SJX8</accession>
<accession>Q8SJX9</accession>
<organism>
    <name type="scientific">Crocidura dsinezumi</name>
    <name type="common">Dsinezumi shrew</name>
    <name type="synonym">Japanese white-toothed shrew</name>
    <dbReference type="NCBI Taxonomy" id="62277"/>
    <lineage>
        <taxon>Eukaryota</taxon>
        <taxon>Metazoa</taxon>
        <taxon>Chordata</taxon>
        <taxon>Craniata</taxon>
        <taxon>Vertebrata</taxon>
        <taxon>Euteleostomi</taxon>
        <taxon>Mammalia</taxon>
        <taxon>Eutheria</taxon>
        <taxon>Laurasiatheria</taxon>
        <taxon>Eulipotyphla</taxon>
        <taxon>Soricidae</taxon>
        <taxon>Crocidurinae</taxon>
        <taxon>Crocidura</taxon>
    </lineage>
</organism>
<keyword id="KW-0249">Electron transport</keyword>
<keyword id="KW-0349">Heme</keyword>
<keyword id="KW-0408">Iron</keyword>
<keyword id="KW-0472">Membrane</keyword>
<keyword id="KW-0479">Metal-binding</keyword>
<keyword id="KW-0496">Mitochondrion</keyword>
<keyword id="KW-0999">Mitochondrion inner membrane</keyword>
<keyword id="KW-0679">Respiratory chain</keyword>
<keyword id="KW-0812">Transmembrane</keyword>
<keyword id="KW-1133">Transmembrane helix</keyword>
<keyword id="KW-0813">Transport</keyword>
<keyword id="KW-0830">Ubiquinone</keyword>
<evidence type="ECO:0000250" key="1"/>
<evidence type="ECO:0000250" key="2">
    <source>
        <dbReference type="UniProtKB" id="P00157"/>
    </source>
</evidence>
<evidence type="ECO:0000255" key="3">
    <source>
        <dbReference type="PROSITE-ProRule" id="PRU00967"/>
    </source>
</evidence>
<evidence type="ECO:0000255" key="4">
    <source>
        <dbReference type="PROSITE-ProRule" id="PRU00968"/>
    </source>
</evidence>
<protein>
    <recommendedName>
        <fullName>Cytochrome b</fullName>
    </recommendedName>
    <alternativeName>
        <fullName>Complex III subunit 3</fullName>
    </alternativeName>
    <alternativeName>
        <fullName>Complex III subunit III</fullName>
    </alternativeName>
    <alternativeName>
        <fullName>Cytochrome b-c1 complex subunit 3</fullName>
    </alternativeName>
    <alternativeName>
        <fullName>Ubiquinol-cytochrome-c reductase complex cytochrome b subunit</fullName>
    </alternativeName>
</protein>
<name>CYB_CRODS</name>